<dbReference type="EMBL" id="CP000936">
    <property type="protein sequence ID" value="ACA35626.1"/>
    <property type="molecule type" value="Genomic_DNA"/>
</dbReference>
<dbReference type="RefSeq" id="WP_001142327.1">
    <property type="nucleotide sequence ID" value="NC_010380.1"/>
</dbReference>
<dbReference type="SMR" id="B1I8Z7"/>
<dbReference type="KEGG" id="spv:SPH_0387"/>
<dbReference type="HOGENOM" id="CLU_104295_1_2_9"/>
<dbReference type="Proteomes" id="UP000002163">
    <property type="component" value="Chromosome"/>
</dbReference>
<dbReference type="GO" id="GO:0015935">
    <property type="term" value="C:small ribosomal subunit"/>
    <property type="evidence" value="ECO:0007669"/>
    <property type="project" value="InterPro"/>
</dbReference>
<dbReference type="GO" id="GO:0019843">
    <property type="term" value="F:rRNA binding"/>
    <property type="evidence" value="ECO:0007669"/>
    <property type="project" value="UniProtKB-UniRule"/>
</dbReference>
<dbReference type="GO" id="GO:0003735">
    <property type="term" value="F:structural constituent of ribosome"/>
    <property type="evidence" value="ECO:0007669"/>
    <property type="project" value="InterPro"/>
</dbReference>
<dbReference type="GO" id="GO:0000049">
    <property type="term" value="F:tRNA binding"/>
    <property type="evidence" value="ECO:0007669"/>
    <property type="project" value="UniProtKB-UniRule"/>
</dbReference>
<dbReference type="GO" id="GO:0006412">
    <property type="term" value="P:translation"/>
    <property type="evidence" value="ECO:0007669"/>
    <property type="project" value="UniProtKB-UniRule"/>
</dbReference>
<dbReference type="CDD" id="cd03368">
    <property type="entry name" value="Ribosomal_S12"/>
    <property type="match status" value="1"/>
</dbReference>
<dbReference type="FunFam" id="2.40.50.140:FF:000001">
    <property type="entry name" value="30S ribosomal protein S12"/>
    <property type="match status" value="1"/>
</dbReference>
<dbReference type="Gene3D" id="2.40.50.140">
    <property type="entry name" value="Nucleic acid-binding proteins"/>
    <property type="match status" value="1"/>
</dbReference>
<dbReference type="HAMAP" id="MF_00403_B">
    <property type="entry name" value="Ribosomal_uS12_B"/>
    <property type="match status" value="1"/>
</dbReference>
<dbReference type="InterPro" id="IPR012340">
    <property type="entry name" value="NA-bd_OB-fold"/>
</dbReference>
<dbReference type="InterPro" id="IPR006032">
    <property type="entry name" value="Ribosomal_uS12"/>
</dbReference>
<dbReference type="InterPro" id="IPR005679">
    <property type="entry name" value="Ribosomal_uS12_bac"/>
</dbReference>
<dbReference type="NCBIfam" id="TIGR00981">
    <property type="entry name" value="rpsL_bact"/>
    <property type="match status" value="1"/>
</dbReference>
<dbReference type="PANTHER" id="PTHR11652">
    <property type="entry name" value="30S RIBOSOMAL PROTEIN S12 FAMILY MEMBER"/>
    <property type="match status" value="1"/>
</dbReference>
<dbReference type="Pfam" id="PF00164">
    <property type="entry name" value="Ribosom_S12_S23"/>
    <property type="match status" value="1"/>
</dbReference>
<dbReference type="PIRSF" id="PIRSF002133">
    <property type="entry name" value="Ribosomal_S12/S23"/>
    <property type="match status" value="1"/>
</dbReference>
<dbReference type="PRINTS" id="PR01034">
    <property type="entry name" value="RIBOSOMALS12"/>
</dbReference>
<dbReference type="SUPFAM" id="SSF50249">
    <property type="entry name" value="Nucleic acid-binding proteins"/>
    <property type="match status" value="1"/>
</dbReference>
<dbReference type="PROSITE" id="PS00055">
    <property type="entry name" value="RIBOSOMAL_S12"/>
    <property type="match status" value="1"/>
</dbReference>
<keyword id="KW-0488">Methylation</keyword>
<keyword id="KW-0687">Ribonucleoprotein</keyword>
<keyword id="KW-0689">Ribosomal protein</keyword>
<keyword id="KW-0694">RNA-binding</keyword>
<keyword id="KW-0699">rRNA-binding</keyword>
<keyword id="KW-0820">tRNA-binding</keyword>
<accession>B1I8Z7</accession>
<feature type="chain" id="PRO_1000123525" description="Small ribosomal subunit protein uS12">
    <location>
        <begin position="1"/>
        <end position="137"/>
    </location>
</feature>
<feature type="region of interest" description="Disordered" evidence="3">
    <location>
        <begin position="1"/>
        <end position="57"/>
    </location>
</feature>
<feature type="modified residue" description="3-methylthioaspartic acid" evidence="1">
    <location>
        <position position="102"/>
    </location>
</feature>
<gene>
    <name evidence="2" type="primary">rpsL</name>
    <name type="ordered locus">SPH_0387</name>
</gene>
<name>RS12_STRPI</name>
<sequence length="137" mass="15182">MPTINQLVRKPRKSKVEKPKSPALNVGYNSHKKVQTNVSSPQKRGVATRVGTMTPRKPNSALRKFARVRLSNLIEVTAYIPGIGHNLQEHSVVLLRGGRVKDLPGVRYHIVRGALDTAGVNDRKQGRSKYGTKRPKA</sequence>
<reference key="1">
    <citation type="journal article" date="2010" name="Genome Biol.">
        <title>Structure and dynamics of the pan-genome of Streptococcus pneumoniae and closely related species.</title>
        <authorList>
            <person name="Donati C."/>
            <person name="Hiller N.L."/>
            <person name="Tettelin H."/>
            <person name="Muzzi A."/>
            <person name="Croucher N.J."/>
            <person name="Angiuoli S.V."/>
            <person name="Oggioni M."/>
            <person name="Dunning Hotopp J.C."/>
            <person name="Hu F.Z."/>
            <person name="Riley D.R."/>
            <person name="Covacci A."/>
            <person name="Mitchell T.J."/>
            <person name="Bentley S.D."/>
            <person name="Kilian M."/>
            <person name="Ehrlich G.D."/>
            <person name="Rappuoli R."/>
            <person name="Moxon E.R."/>
            <person name="Masignani V."/>
        </authorList>
    </citation>
    <scope>NUCLEOTIDE SEQUENCE [LARGE SCALE GENOMIC DNA]</scope>
    <source>
        <strain>Hungary19A-6</strain>
    </source>
</reference>
<protein>
    <recommendedName>
        <fullName evidence="2">Small ribosomal subunit protein uS12</fullName>
    </recommendedName>
    <alternativeName>
        <fullName evidence="4">30S ribosomal protein S12</fullName>
    </alternativeName>
</protein>
<comment type="function">
    <text evidence="2">With S4 and S5 plays an important role in translational accuracy.</text>
</comment>
<comment type="function">
    <text evidence="2">Interacts with and stabilizes bases of the 16S rRNA that are involved in tRNA selection in the A site and with the mRNA backbone. Located at the interface of the 30S and 50S subunits, it traverses the body of the 30S subunit contacting proteins on the other side and probably holding the rRNA structure together. The combined cluster of proteins S8, S12 and S17 appears to hold together the shoulder and platform of the 30S subunit.</text>
</comment>
<comment type="subunit">
    <text evidence="2">Part of the 30S ribosomal subunit. Contacts proteins S8 and S17. May interact with IF1 in the 30S initiation complex.</text>
</comment>
<comment type="similarity">
    <text evidence="2">Belongs to the universal ribosomal protein uS12 family.</text>
</comment>
<evidence type="ECO:0000250" key="1"/>
<evidence type="ECO:0000255" key="2">
    <source>
        <dbReference type="HAMAP-Rule" id="MF_00403"/>
    </source>
</evidence>
<evidence type="ECO:0000256" key="3">
    <source>
        <dbReference type="SAM" id="MobiDB-lite"/>
    </source>
</evidence>
<evidence type="ECO:0000305" key="4"/>
<organism>
    <name type="scientific">Streptococcus pneumoniae (strain Hungary19A-6)</name>
    <dbReference type="NCBI Taxonomy" id="487214"/>
    <lineage>
        <taxon>Bacteria</taxon>
        <taxon>Bacillati</taxon>
        <taxon>Bacillota</taxon>
        <taxon>Bacilli</taxon>
        <taxon>Lactobacillales</taxon>
        <taxon>Streptococcaceae</taxon>
        <taxon>Streptococcus</taxon>
    </lineage>
</organism>
<proteinExistence type="inferred from homology"/>